<gene>
    <name evidence="1" type="primary">sucC</name>
    <name type="ordered locus">FTL_1553</name>
</gene>
<dbReference type="EC" id="6.2.1.5" evidence="1"/>
<dbReference type="EMBL" id="AM233362">
    <property type="protein sequence ID" value="CAJ79992.1"/>
    <property type="molecule type" value="Genomic_DNA"/>
</dbReference>
<dbReference type="RefSeq" id="WP_003016913.1">
    <property type="nucleotide sequence ID" value="NZ_CP009694.1"/>
</dbReference>
<dbReference type="SMR" id="Q2A253"/>
<dbReference type="KEGG" id="ftl:FTL_1553"/>
<dbReference type="UniPathway" id="UPA00223">
    <property type="reaction ID" value="UER00999"/>
</dbReference>
<dbReference type="Proteomes" id="UP000001944">
    <property type="component" value="Chromosome"/>
</dbReference>
<dbReference type="GO" id="GO:0005829">
    <property type="term" value="C:cytosol"/>
    <property type="evidence" value="ECO:0007669"/>
    <property type="project" value="TreeGrafter"/>
</dbReference>
<dbReference type="GO" id="GO:0042709">
    <property type="term" value="C:succinate-CoA ligase complex"/>
    <property type="evidence" value="ECO:0007669"/>
    <property type="project" value="TreeGrafter"/>
</dbReference>
<dbReference type="GO" id="GO:0005524">
    <property type="term" value="F:ATP binding"/>
    <property type="evidence" value="ECO:0007669"/>
    <property type="project" value="UniProtKB-UniRule"/>
</dbReference>
<dbReference type="GO" id="GO:0000287">
    <property type="term" value="F:magnesium ion binding"/>
    <property type="evidence" value="ECO:0007669"/>
    <property type="project" value="UniProtKB-UniRule"/>
</dbReference>
<dbReference type="GO" id="GO:0004775">
    <property type="term" value="F:succinate-CoA ligase (ADP-forming) activity"/>
    <property type="evidence" value="ECO:0007669"/>
    <property type="project" value="UniProtKB-UniRule"/>
</dbReference>
<dbReference type="GO" id="GO:0004776">
    <property type="term" value="F:succinate-CoA ligase (GDP-forming) activity"/>
    <property type="evidence" value="ECO:0007669"/>
    <property type="project" value="RHEA"/>
</dbReference>
<dbReference type="GO" id="GO:0006104">
    <property type="term" value="P:succinyl-CoA metabolic process"/>
    <property type="evidence" value="ECO:0007669"/>
    <property type="project" value="TreeGrafter"/>
</dbReference>
<dbReference type="GO" id="GO:0006099">
    <property type="term" value="P:tricarboxylic acid cycle"/>
    <property type="evidence" value="ECO:0007669"/>
    <property type="project" value="UniProtKB-UniRule"/>
</dbReference>
<dbReference type="FunFam" id="3.30.1490.20:FF:000002">
    <property type="entry name" value="Succinate--CoA ligase [ADP-forming] subunit beta"/>
    <property type="match status" value="1"/>
</dbReference>
<dbReference type="FunFam" id="3.30.470.20:FF:000002">
    <property type="entry name" value="Succinate--CoA ligase [ADP-forming] subunit beta"/>
    <property type="match status" value="1"/>
</dbReference>
<dbReference type="FunFam" id="3.40.50.261:FF:000001">
    <property type="entry name" value="Succinate--CoA ligase [ADP-forming] subunit beta"/>
    <property type="match status" value="1"/>
</dbReference>
<dbReference type="Gene3D" id="3.30.1490.20">
    <property type="entry name" value="ATP-grasp fold, A domain"/>
    <property type="match status" value="1"/>
</dbReference>
<dbReference type="Gene3D" id="3.30.470.20">
    <property type="entry name" value="ATP-grasp fold, B domain"/>
    <property type="match status" value="1"/>
</dbReference>
<dbReference type="Gene3D" id="3.40.50.261">
    <property type="entry name" value="Succinyl-CoA synthetase domains"/>
    <property type="match status" value="1"/>
</dbReference>
<dbReference type="HAMAP" id="MF_00558">
    <property type="entry name" value="Succ_CoA_beta"/>
    <property type="match status" value="1"/>
</dbReference>
<dbReference type="InterPro" id="IPR011761">
    <property type="entry name" value="ATP-grasp"/>
</dbReference>
<dbReference type="InterPro" id="IPR013650">
    <property type="entry name" value="ATP-grasp_succ-CoA_synth-type"/>
</dbReference>
<dbReference type="InterPro" id="IPR013815">
    <property type="entry name" value="ATP_grasp_subdomain_1"/>
</dbReference>
<dbReference type="InterPro" id="IPR017866">
    <property type="entry name" value="Succ-CoA_synthase_bsu_CS"/>
</dbReference>
<dbReference type="InterPro" id="IPR005811">
    <property type="entry name" value="SUCC_ACL_C"/>
</dbReference>
<dbReference type="InterPro" id="IPR005809">
    <property type="entry name" value="Succ_CoA_ligase-like_bsu"/>
</dbReference>
<dbReference type="InterPro" id="IPR016102">
    <property type="entry name" value="Succinyl-CoA_synth-like"/>
</dbReference>
<dbReference type="NCBIfam" id="NF001913">
    <property type="entry name" value="PRK00696.1"/>
    <property type="match status" value="1"/>
</dbReference>
<dbReference type="NCBIfam" id="TIGR01016">
    <property type="entry name" value="sucCoAbeta"/>
    <property type="match status" value="1"/>
</dbReference>
<dbReference type="PANTHER" id="PTHR11815:SF10">
    <property type="entry name" value="SUCCINATE--COA LIGASE [GDP-FORMING] SUBUNIT BETA, MITOCHONDRIAL"/>
    <property type="match status" value="1"/>
</dbReference>
<dbReference type="PANTHER" id="PTHR11815">
    <property type="entry name" value="SUCCINYL-COA SYNTHETASE BETA CHAIN"/>
    <property type="match status" value="1"/>
</dbReference>
<dbReference type="Pfam" id="PF08442">
    <property type="entry name" value="ATP-grasp_2"/>
    <property type="match status" value="1"/>
</dbReference>
<dbReference type="Pfam" id="PF00549">
    <property type="entry name" value="Ligase_CoA"/>
    <property type="match status" value="1"/>
</dbReference>
<dbReference type="PIRSF" id="PIRSF001554">
    <property type="entry name" value="SucCS_beta"/>
    <property type="match status" value="1"/>
</dbReference>
<dbReference type="SUPFAM" id="SSF56059">
    <property type="entry name" value="Glutathione synthetase ATP-binding domain-like"/>
    <property type="match status" value="1"/>
</dbReference>
<dbReference type="SUPFAM" id="SSF52210">
    <property type="entry name" value="Succinyl-CoA synthetase domains"/>
    <property type="match status" value="1"/>
</dbReference>
<dbReference type="PROSITE" id="PS50975">
    <property type="entry name" value="ATP_GRASP"/>
    <property type="match status" value="1"/>
</dbReference>
<dbReference type="PROSITE" id="PS01217">
    <property type="entry name" value="SUCCINYL_COA_LIG_3"/>
    <property type="match status" value="1"/>
</dbReference>
<name>SUCC_FRATH</name>
<accession>Q2A253</accession>
<evidence type="ECO:0000255" key="1">
    <source>
        <dbReference type="HAMAP-Rule" id="MF_00558"/>
    </source>
</evidence>
<reference key="1">
    <citation type="submission" date="2006-03" db="EMBL/GenBank/DDBJ databases">
        <title>Complete genome sequence of Francisella tularensis LVS (Live Vaccine Strain).</title>
        <authorList>
            <person name="Chain P."/>
            <person name="Larimer F."/>
            <person name="Land M."/>
            <person name="Stilwagen S."/>
            <person name="Larsson P."/>
            <person name="Bearden S."/>
            <person name="Chu M."/>
            <person name="Oyston P."/>
            <person name="Forsman M."/>
            <person name="Andersson S."/>
            <person name="Lindler L."/>
            <person name="Titball R."/>
            <person name="Garcia E."/>
        </authorList>
    </citation>
    <scope>NUCLEOTIDE SEQUENCE [LARGE SCALE GENOMIC DNA]</scope>
    <source>
        <strain>LVS</strain>
    </source>
</reference>
<feature type="chain" id="PRO_1000082090" description="Succinate--CoA ligase [ADP-forming] subunit beta">
    <location>
        <begin position="1"/>
        <end position="387"/>
    </location>
</feature>
<feature type="domain" description="ATP-grasp" evidence="1">
    <location>
        <begin position="9"/>
        <end position="245"/>
    </location>
</feature>
<feature type="binding site" evidence="1">
    <location>
        <position position="46"/>
    </location>
    <ligand>
        <name>ATP</name>
        <dbReference type="ChEBI" id="CHEBI:30616"/>
    </ligand>
</feature>
<feature type="binding site" evidence="1">
    <location>
        <begin position="53"/>
        <end position="55"/>
    </location>
    <ligand>
        <name>ATP</name>
        <dbReference type="ChEBI" id="CHEBI:30616"/>
    </ligand>
</feature>
<feature type="binding site" evidence="1">
    <location>
        <position position="100"/>
    </location>
    <ligand>
        <name>ATP</name>
        <dbReference type="ChEBI" id="CHEBI:30616"/>
    </ligand>
</feature>
<feature type="binding site" evidence="1">
    <location>
        <position position="103"/>
    </location>
    <ligand>
        <name>ATP</name>
        <dbReference type="ChEBI" id="CHEBI:30616"/>
    </ligand>
</feature>
<feature type="binding site" evidence="1">
    <location>
        <position position="108"/>
    </location>
    <ligand>
        <name>ATP</name>
        <dbReference type="ChEBI" id="CHEBI:30616"/>
    </ligand>
</feature>
<feature type="binding site" evidence="1">
    <location>
        <position position="200"/>
    </location>
    <ligand>
        <name>Mg(2+)</name>
        <dbReference type="ChEBI" id="CHEBI:18420"/>
    </ligand>
</feature>
<feature type="binding site" evidence="1">
    <location>
        <position position="214"/>
    </location>
    <ligand>
        <name>Mg(2+)</name>
        <dbReference type="ChEBI" id="CHEBI:18420"/>
    </ligand>
</feature>
<feature type="binding site" evidence="1">
    <location>
        <position position="265"/>
    </location>
    <ligand>
        <name>substrate</name>
        <note>ligand shared with subunit alpha</note>
    </ligand>
</feature>
<feature type="binding site" evidence="1">
    <location>
        <begin position="322"/>
        <end position="324"/>
    </location>
    <ligand>
        <name>substrate</name>
        <note>ligand shared with subunit alpha</note>
    </ligand>
</feature>
<keyword id="KW-0067">ATP-binding</keyword>
<keyword id="KW-0436">Ligase</keyword>
<keyword id="KW-0460">Magnesium</keyword>
<keyword id="KW-0479">Metal-binding</keyword>
<keyword id="KW-0547">Nucleotide-binding</keyword>
<keyword id="KW-1185">Reference proteome</keyword>
<keyword id="KW-0816">Tricarboxylic acid cycle</keyword>
<organism>
    <name type="scientific">Francisella tularensis subsp. holarctica (strain LVS)</name>
    <dbReference type="NCBI Taxonomy" id="376619"/>
    <lineage>
        <taxon>Bacteria</taxon>
        <taxon>Pseudomonadati</taxon>
        <taxon>Pseudomonadota</taxon>
        <taxon>Gammaproteobacteria</taxon>
        <taxon>Thiotrichales</taxon>
        <taxon>Francisellaceae</taxon>
        <taxon>Francisella</taxon>
    </lineage>
</organism>
<protein>
    <recommendedName>
        <fullName evidence="1">Succinate--CoA ligase [ADP-forming] subunit beta</fullName>
        <ecNumber evidence="1">6.2.1.5</ecNumber>
    </recommendedName>
    <alternativeName>
        <fullName evidence="1">Succinyl-CoA synthetase subunit beta</fullName>
        <shortName evidence="1">SCS-beta</shortName>
    </alternativeName>
</protein>
<sequence>MNLHEYQAKDLLESYGLKVQKGIVAHNPNEAAQAFDQLGGKFAVVKAQVHAGGRGKAGGVKVVKSSQEAREVAESLIGKNLVTFQTDAEGQPVNSVGIFEDVYPVTRELYLGAVVDRSSRKVTFMASTEGGVDIEEVAHNSPEKILKVEVDPLVGLQPFQAREVAFKLGLEGKQINDFVKTMLGAYKAFIECDFALFEINPLAVRENGEIVCVDGKINLDSNALYRHPKLLALRDKSQENAKELKASEHELNYVALEGNIGCMVNGAGLAMATMDIIQLYGGKPANFLDVGGGATKERVIEAFKLILDDENVKAVLINIFGGIVRCDMIAEAIIEAVKEVNVTVPVVVRLEGNNAEKGAKILADSGLKLIPADGLADAADKVVKSLG</sequence>
<proteinExistence type="inferred from homology"/>
<comment type="function">
    <text evidence="1">Succinyl-CoA synthetase functions in the citric acid cycle (TCA), coupling the hydrolysis of succinyl-CoA to the synthesis of either ATP or GTP and thus represents the only step of substrate-level phosphorylation in the TCA. The beta subunit provides nucleotide specificity of the enzyme and binds the substrate succinate, while the binding sites for coenzyme A and phosphate are found in the alpha subunit.</text>
</comment>
<comment type="catalytic activity">
    <reaction evidence="1">
        <text>succinate + ATP + CoA = succinyl-CoA + ADP + phosphate</text>
        <dbReference type="Rhea" id="RHEA:17661"/>
        <dbReference type="ChEBI" id="CHEBI:30031"/>
        <dbReference type="ChEBI" id="CHEBI:30616"/>
        <dbReference type="ChEBI" id="CHEBI:43474"/>
        <dbReference type="ChEBI" id="CHEBI:57287"/>
        <dbReference type="ChEBI" id="CHEBI:57292"/>
        <dbReference type="ChEBI" id="CHEBI:456216"/>
        <dbReference type="EC" id="6.2.1.5"/>
    </reaction>
    <physiologicalReaction direction="right-to-left" evidence="1">
        <dbReference type="Rhea" id="RHEA:17663"/>
    </physiologicalReaction>
</comment>
<comment type="catalytic activity">
    <reaction evidence="1">
        <text>GTP + succinate + CoA = succinyl-CoA + GDP + phosphate</text>
        <dbReference type="Rhea" id="RHEA:22120"/>
        <dbReference type="ChEBI" id="CHEBI:30031"/>
        <dbReference type="ChEBI" id="CHEBI:37565"/>
        <dbReference type="ChEBI" id="CHEBI:43474"/>
        <dbReference type="ChEBI" id="CHEBI:57287"/>
        <dbReference type="ChEBI" id="CHEBI:57292"/>
        <dbReference type="ChEBI" id="CHEBI:58189"/>
    </reaction>
    <physiologicalReaction direction="right-to-left" evidence="1">
        <dbReference type="Rhea" id="RHEA:22122"/>
    </physiologicalReaction>
</comment>
<comment type="cofactor">
    <cofactor evidence="1">
        <name>Mg(2+)</name>
        <dbReference type="ChEBI" id="CHEBI:18420"/>
    </cofactor>
    <text evidence="1">Binds 1 Mg(2+) ion per subunit.</text>
</comment>
<comment type="pathway">
    <text evidence="1">Carbohydrate metabolism; tricarboxylic acid cycle; succinate from succinyl-CoA (ligase route): step 1/1.</text>
</comment>
<comment type="subunit">
    <text evidence="1">Heterotetramer of two alpha and two beta subunits.</text>
</comment>
<comment type="similarity">
    <text evidence="1">Belongs to the succinate/malate CoA ligase beta subunit family.</text>
</comment>